<name>ISPE_BIFAA</name>
<gene>
    <name evidence="1" type="primary">ispE</name>
    <name type="ordered locus">BAD_1616</name>
</gene>
<reference key="1">
    <citation type="submission" date="2006-12" db="EMBL/GenBank/DDBJ databases">
        <title>Bifidobacterium adolescentis complete genome sequence.</title>
        <authorList>
            <person name="Suzuki T."/>
            <person name="Tsuda Y."/>
            <person name="Kanou N."/>
            <person name="Inoue T."/>
            <person name="Kumazaki K."/>
            <person name="Nagano S."/>
            <person name="Hirai S."/>
            <person name="Tanaka K."/>
            <person name="Watanabe K."/>
        </authorList>
    </citation>
    <scope>NUCLEOTIDE SEQUENCE [LARGE SCALE GENOMIC DNA]</scope>
    <source>
        <strain>ATCC 15703 / DSM 20083 / NCTC 11814 / E194a</strain>
    </source>
</reference>
<organism>
    <name type="scientific">Bifidobacterium adolescentis (strain ATCC 15703 / DSM 20083 / NCTC 11814 / E194a)</name>
    <dbReference type="NCBI Taxonomy" id="367928"/>
    <lineage>
        <taxon>Bacteria</taxon>
        <taxon>Bacillati</taxon>
        <taxon>Actinomycetota</taxon>
        <taxon>Actinomycetes</taxon>
        <taxon>Bifidobacteriales</taxon>
        <taxon>Bifidobacteriaceae</taxon>
        <taxon>Bifidobacterium</taxon>
    </lineage>
</organism>
<dbReference type="EC" id="2.7.1.148" evidence="1"/>
<dbReference type="EMBL" id="AP009256">
    <property type="protein sequence ID" value="BAF40397.1"/>
    <property type="molecule type" value="Genomic_DNA"/>
</dbReference>
<dbReference type="RefSeq" id="WP_011743907.1">
    <property type="nucleotide sequence ID" value="NC_008618.1"/>
</dbReference>
<dbReference type="SMR" id="A1A3W4"/>
<dbReference type="STRING" id="367928.BAD_1616"/>
<dbReference type="PaxDb" id="1680-BADO_1730"/>
<dbReference type="GeneID" id="4556224"/>
<dbReference type="KEGG" id="bad:BAD_1616"/>
<dbReference type="HOGENOM" id="CLU_053057_1_1_11"/>
<dbReference type="UniPathway" id="UPA00056">
    <property type="reaction ID" value="UER00094"/>
</dbReference>
<dbReference type="Proteomes" id="UP000008702">
    <property type="component" value="Chromosome"/>
</dbReference>
<dbReference type="GO" id="GO:0050515">
    <property type="term" value="F:4-(cytidine 5'-diphospho)-2-C-methyl-D-erythritol kinase activity"/>
    <property type="evidence" value="ECO:0007669"/>
    <property type="project" value="UniProtKB-UniRule"/>
</dbReference>
<dbReference type="GO" id="GO:0005524">
    <property type="term" value="F:ATP binding"/>
    <property type="evidence" value="ECO:0007669"/>
    <property type="project" value="UniProtKB-UniRule"/>
</dbReference>
<dbReference type="GO" id="GO:0019288">
    <property type="term" value="P:isopentenyl diphosphate biosynthetic process, methylerythritol 4-phosphate pathway"/>
    <property type="evidence" value="ECO:0007669"/>
    <property type="project" value="UniProtKB-UniRule"/>
</dbReference>
<dbReference type="GO" id="GO:0016114">
    <property type="term" value="P:terpenoid biosynthetic process"/>
    <property type="evidence" value="ECO:0007669"/>
    <property type="project" value="InterPro"/>
</dbReference>
<dbReference type="Gene3D" id="3.30.230.10">
    <property type="match status" value="1"/>
</dbReference>
<dbReference type="Gene3D" id="3.30.70.890">
    <property type="entry name" value="GHMP kinase, C-terminal domain"/>
    <property type="match status" value="1"/>
</dbReference>
<dbReference type="HAMAP" id="MF_00061">
    <property type="entry name" value="IspE"/>
    <property type="match status" value="1"/>
</dbReference>
<dbReference type="InterPro" id="IPR013750">
    <property type="entry name" value="GHMP_kinase_C_dom"/>
</dbReference>
<dbReference type="InterPro" id="IPR036554">
    <property type="entry name" value="GHMP_kinase_C_sf"/>
</dbReference>
<dbReference type="InterPro" id="IPR006204">
    <property type="entry name" value="GHMP_kinase_N_dom"/>
</dbReference>
<dbReference type="InterPro" id="IPR004424">
    <property type="entry name" value="IspE"/>
</dbReference>
<dbReference type="InterPro" id="IPR020568">
    <property type="entry name" value="Ribosomal_Su5_D2-typ_SF"/>
</dbReference>
<dbReference type="InterPro" id="IPR014721">
    <property type="entry name" value="Ribsml_uS5_D2-typ_fold_subgr"/>
</dbReference>
<dbReference type="PANTHER" id="PTHR43527">
    <property type="entry name" value="4-DIPHOSPHOCYTIDYL-2-C-METHYL-D-ERYTHRITOL KINASE, CHLOROPLASTIC"/>
    <property type="match status" value="1"/>
</dbReference>
<dbReference type="PANTHER" id="PTHR43527:SF2">
    <property type="entry name" value="4-DIPHOSPHOCYTIDYL-2-C-METHYL-D-ERYTHRITOL KINASE, CHLOROPLASTIC"/>
    <property type="match status" value="1"/>
</dbReference>
<dbReference type="Pfam" id="PF08544">
    <property type="entry name" value="GHMP_kinases_C"/>
    <property type="match status" value="1"/>
</dbReference>
<dbReference type="Pfam" id="PF00288">
    <property type="entry name" value="GHMP_kinases_N"/>
    <property type="match status" value="1"/>
</dbReference>
<dbReference type="PIRSF" id="PIRSF010376">
    <property type="entry name" value="IspE"/>
    <property type="match status" value="1"/>
</dbReference>
<dbReference type="SUPFAM" id="SSF55060">
    <property type="entry name" value="GHMP Kinase, C-terminal domain"/>
    <property type="match status" value="1"/>
</dbReference>
<dbReference type="SUPFAM" id="SSF54211">
    <property type="entry name" value="Ribosomal protein S5 domain 2-like"/>
    <property type="match status" value="1"/>
</dbReference>
<comment type="function">
    <text evidence="1">Catalyzes the phosphorylation of the position 2 hydroxy group of 4-diphosphocytidyl-2C-methyl-D-erythritol.</text>
</comment>
<comment type="catalytic activity">
    <reaction evidence="1">
        <text>4-CDP-2-C-methyl-D-erythritol + ATP = 4-CDP-2-C-methyl-D-erythritol 2-phosphate + ADP + H(+)</text>
        <dbReference type="Rhea" id="RHEA:18437"/>
        <dbReference type="ChEBI" id="CHEBI:15378"/>
        <dbReference type="ChEBI" id="CHEBI:30616"/>
        <dbReference type="ChEBI" id="CHEBI:57823"/>
        <dbReference type="ChEBI" id="CHEBI:57919"/>
        <dbReference type="ChEBI" id="CHEBI:456216"/>
        <dbReference type="EC" id="2.7.1.148"/>
    </reaction>
</comment>
<comment type="pathway">
    <text evidence="1">Isoprenoid biosynthesis; isopentenyl diphosphate biosynthesis via DXP pathway; isopentenyl diphosphate from 1-deoxy-D-xylulose 5-phosphate: step 3/6.</text>
</comment>
<comment type="similarity">
    <text evidence="1">Belongs to the GHMP kinase family. IspE subfamily.</text>
</comment>
<feature type="chain" id="PRO_0000335703" description="4-diphosphocytidyl-2-C-methyl-D-erythritol kinase">
    <location>
        <begin position="1"/>
        <end position="308"/>
    </location>
</feature>
<feature type="active site" evidence="1">
    <location>
        <position position="24"/>
    </location>
</feature>
<feature type="active site" evidence="1">
    <location>
        <position position="160"/>
    </location>
</feature>
<feature type="binding site" evidence="1">
    <location>
        <begin position="118"/>
        <end position="128"/>
    </location>
    <ligand>
        <name>ATP</name>
        <dbReference type="ChEBI" id="CHEBI:30616"/>
    </ligand>
</feature>
<accession>A1A3W4</accession>
<proteinExistence type="inferred from homology"/>
<evidence type="ECO:0000255" key="1">
    <source>
        <dbReference type="HAMAP-Rule" id="MF_00061"/>
    </source>
</evidence>
<keyword id="KW-0067">ATP-binding</keyword>
<keyword id="KW-0414">Isoprene biosynthesis</keyword>
<keyword id="KW-0418">Kinase</keyword>
<keyword id="KW-0547">Nucleotide-binding</keyword>
<keyword id="KW-1185">Reference proteome</keyword>
<keyword id="KW-0808">Transferase</keyword>
<sequence>MSTIDSPAIGTATINAVSVDCPAKTNLTLHVGPSHAEWGGRHELDTIYCAVGVYDTVTATRKAPGSGFSLNLEGAYLGDLASSGSDMRRNHAVLALFAMAEASSHEPDVALNIDKRIPVGAGMAGGSADAAATILALNTLWDLDWPIERLQEVAATLGADMPFCLTGGYARGTGFGERIEQLDDDGDIVRDLTERGFTGHLLVGAYRAELRTPEVYATFDQIGAGDGDENHLQKAAVSLHPRSGQAIEEALRAGASQAFVSGSGPSVIAFVPTEDAADAVQRAWQDSRCVDRIIATNAPARPIVHITA</sequence>
<protein>
    <recommendedName>
        <fullName evidence="1">4-diphosphocytidyl-2-C-methyl-D-erythritol kinase</fullName>
        <shortName evidence="1">CMK</shortName>
        <ecNumber evidence="1">2.7.1.148</ecNumber>
    </recommendedName>
    <alternativeName>
        <fullName evidence="1">4-(cytidine-5'-diphospho)-2-C-methyl-D-erythritol kinase</fullName>
    </alternativeName>
</protein>